<name>VF509_ASFP4</name>
<gene>
    <name type="ordered locus">Pret-135</name>
</gene>
<comment type="catalytic activity">
    <reaction>
        <text>ATP + H2O = ADP + phosphate + H(+)</text>
        <dbReference type="Rhea" id="RHEA:13065"/>
        <dbReference type="ChEBI" id="CHEBI:15377"/>
        <dbReference type="ChEBI" id="CHEBI:15378"/>
        <dbReference type="ChEBI" id="CHEBI:30616"/>
        <dbReference type="ChEBI" id="CHEBI:43474"/>
        <dbReference type="ChEBI" id="CHEBI:456216"/>
        <dbReference type="EC" id="3.6.4.13"/>
    </reaction>
</comment>
<comment type="induction">
    <text evidence="2">Expressed in the late phase of the viral replicative cycle.</text>
</comment>
<comment type="similarity">
    <text evidence="2">Belongs to the DEAD box helicase family. DEAH subfamily.</text>
</comment>
<reference key="1">
    <citation type="submission" date="2003-03" db="EMBL/GenBank/DDBJ databases">
        <title>African swine fever virus genomes.</title>
        <authorList>
            <person name="Kutish G.F."/>
            <person name="Rock D.L."/>
        </authorList>
    </citation>
    <scope>NUCLEOTIDE SEQUENCE [GENOMIC DNA]</scope>
</reference>
<dbReference type="EC" id="3.6.4.13"/>
<dbReference type="EMBL" id="AY261363">
    <property type="status" value="NOT_ANNOTATED_CDS"/>
    <property type="molecule type" value="Genomic_DNA"/>
</dbReference>
<dbReference type="Proteomes" id="UP000000859">
    <property type="component" value="Segment"/>
</dbReference>
<dbReference type="GO" id="GO:0005524">
    <property type="term" value="F:ATP binding"/>
    <property type="evidence" value="ECO:0007669"/>
    <property type="project" value="UniProtKB-KW"/>
</dbReference>
<dbReference type="GO" id="GO:0016887">
    <property type="term" value="F:ATP hydrolysis activity"/>
    <property type="evidence" value="ECO:0007669"/>
    <property type="project" value="RHEA"/>
</dbReference>
<dbReference type="GO" id="GO:0003677">
    <property type="term" value="F:DNA binding"/>
    <property type="evidence" value="ECO:0007669"/>
    <property type="project" value="InterPro"/>
</dbReference>
<dbReference type="GO" id="GO:0003724">
    <property type="term" value="F:RNA helicase activity"/>
    <property type="evidence" value="ECO:0007669"/>
    <property type="project" value="UniProtKB-EC"/>
</dbReference>
<dbReference type="Gene3D" id="3.40.50.300">
    <property type="entry name" value="P-loop containing nucleotide triphosphate hydrolases"/>
    <property type="match status" value="2"/>
</dbReference>
<dbReference type="InterPro" id="IPR006935">
    <property type="entry name" value="Helicase/UvrB_N"/>
</dbReference>
<dbReference type="InterPro" id="IPR014001">
    <property type="entry name" value="Helicase_ATP-bd"/>
</dbReference>
<dbReference type="InterPro" id="IPR050742">
    <property type="entry name" value="Helicase_Restrict-Modif_Enz"/>
</dbReference>
<dbReference type="InterPro" id="IPR027417">
    <property type="entry name" value="P-loop_NTPase"/>
</dbReference>
<dbReference type="PANTHER" id="PTHR47396:SF1">
    <property type="entry name" value="ATP-DEPENDENT HELICASE IRC3-RELATED"/>
    <property type="match status" value="1"/>
</dbReference>
<dbReference type="PANTHER" id="PTHR47396">
    <property type="entry name" value="TYPE I RESTRICTION ENZYME ECOKI R PROTEIN"/>
    <property type="match status" value="1"/>
</dbReference>
<dbReference type="Pfam" id="PF04851">
    <property type="entry name" value="ResIII"/>
    <property type="match status" value="1"/>
</dbReference>
<dbReference type="SMART" id="SM00487">
    <property type="entry name" value="DEXDc"/>
    <property type="match status" value="1"/>
</dbReference>
<dbReference type="SUPFAM" id="SSF52540">
    <property type="entry name" value="P-loop containing nucleoside triphosphate hydrolases"/>
    <property type="match status" value="2"/>
</dbReference>
<dbReference type="PROSITE" id="PS00690">
    <property type="entry name" value="DEAH_ATP_HELICASE"/>
    <property type="match status" value="1"/>
</dbReference>
<dbReference type="PROSITE" id="PS51192">
    <property type="entry name" value="HELICASE_ATP_BIND_1"/>
    <property type="match status" value="1"/>
</dbReference>
<organism>
    <name type="scientific">African swine fever virus (isolate Tick/South Africa/Pretoriuskop Pr4/1996)</name>
    <name type="common">ASFV</name>
    <dbReference type="NCBI Taxonomy" id="561443"/>
    <lineage>
        <taxon>Viruses</taxon>
        <taxon>Varidnaviria</taxon>
        <taxon>Bamfordvirae</taxon>
        <taxon>Nucleocytoviricota</taxon>
        <taxon>Pokkesviricetes</taxon>
        <taxon>Asfuvirales</taxon>
        <taxon>Asfarviridae</taxon>
        <taxon>Asfivirus</taxon>
        <taxon>African swine fever virus</taxon>
    </lineage>
</organism>
<proteinExistence type="inferred from homology"/>
<evidence type="ECO:0000255" key="1">
    <source>
        <dbReference type="PROSITE-ProRule" id="PRU00541"/>
    </source>
</evidence>
<evidence type="ECO:0000305" key="2"/>
<sequence>MEAIISFAGIGINYKRLQSKLQHDFGRLLKALTVTARALPGQPKHIAIRQETAFTLQGEYIYFPILLRKQFEMFNMVYTARPVSLRALPCVETEFPLFNYQQEMVDKIHKKLLSPYGRFYLHLNTGLGKTRIAISIIQKLLYPTLVIVPTKAIQVQWIDELTLLLPHLRVAAYNNAACKKKDMTSKEYDVIVGIINTLRKKPEQFFEPFGLVVLDEAHELHSPENYKIFWKIQLSRILGLSATPLDRPDGMDKIIIHHLGQPQRTVSPTTTFSGYVREIEYQGHPDFVSPVCINEKVSAIATIDKLLQDPSRIQLVVNEAKRLYSLHTAEPHKWGTDEPYGIIIFVEFRKLLEIFYQALSKEFKDVQIIVPEVALLCGGVSNTALSQTHSASIILLTYGYGRRGISFKHMTSIIMATPRRNNMEQILGRITRQGSDEKKVRIVVDIKDTLSPLSSQVYDRHRIYKKKGYPIFKCSASYQQPYSSNEVLIWDPYNESCLACTTTPPSPSKQKHT</sequence>
<accession>P0C9A8</accession>
<organismHost>
    <name type="scientific">Ornithodoros</name>
    <name type="common">relapsing fever ticks</name>
    <dbReference type="NCBI Taxonomy" id="6937"/>
</organismHost>
<organismHost>
    <name type="scientific">Phacochoerus aethiopicus</name>
    <name type="common">Warthog</name>
    <dbReference type="NCBI Taxonomy" id="85517"/>
</organismHost>
<organismHost>
    <name type="scientific">Phacochoerus africanus</name>
    <name type="common">Warthog</name>
    <dbReference type="NCBI Taxonomy" id="41426"/>
</organismHost>
<organismHost>
    <name type="scientific">Potamochoerus larvatus</name>
    <name type="common">Bushpig</name>
    <dbReference type="NCBI Taxonomy" id="273792"/>
</organismHost>
<organismHost>
    <name type="scientific">Sus scrofa</name>
    <name type="common">Pig</name>
    <dbReference type="NCBI Taxonomy" id="9823"/>
</organismHost>
<protein>
    <recommendedName>
        <fullName>Putative ATP-dependent RNA helicase QP509L</fullName>
        <ecNumber>3.6.4.13</ecNumber>
    </recommendedName>
</protein>
<feature type="chain" id="PRO_0000373114" description="Putative ATP-dependent RNA helicase QP509L">
    <location>
        <begin position="1"/>
        <end position="513"/>
    </location>
</feature>
<feature type="domain" description="Helicase ATP-binding" evidence="1">
    <location>
        <begin position="110"/>
        <end position="262"/>
    </location>
</feature>
<feature type="short sequence motif" description="DEAH box">
    <location>
        <begin position="215"/>
        <end position="218"/>
    </location>
</feature>
<feature type="binding site" evidence="1">
    <location>
        <begin position="123"/>
        <end position="130"/>
    </location>
    <ligand>
        <name>ATP</name>
        <dbReference type="ChEBI" id="CHEBI:30616"/>
    </ligand>
</feature>
<keyword id="KW-0067">ATP-binding</keyword>
<keyword id="KW-0347">Helicase</keyword>
<keyword id="KW-0378">Hydrolase</keyword>
<keyword id="KW-0426">Late protein</keyword>
<keyword id="KW-0547">Nucleotide-binding</keyword>